<accession>Q32PZ9</accession>
<organism>
    <name type="scientific">Rattus norvegicus</name>
    <name type="common">Rat</name>
    <dbReference type="NCBI Taxonomy" id="10116"/>
    <lineage>
        <taxon>Eukaryota</taxon>
        <taxon>Metazoa</taxon>
        <taxon>Chordata</taxon>
        <taxon>Craniata</taxon>
        <taxon>Vertebrata</taxon>
        <taxon>Euteleostomi</taxon>
        <taxon>Mammalia</taxon>
        <taxon>Eutheria</taxon>
        <taxon>Euarchontoglires</taxon>
        <taxon>Glires</taxon>
        <taxon>Rodentia</taxon>
        <taxon>Myomorpha</taxon>
        <taxon>Muroidea</taxon>
        <taxon>Muridae</taxon>
        <taxon>Murinae</taxon>
        <taxon>Rattus</taxon>
    </lineage>
</organism>
<reference key="1">
    <citation type="journal article" date="2004" name="Genome Res.">
        <title>The status, quality, and expansion of the NIH full-length cDNA project: the Mammalian Gene Collection (MGC).</title>
        <authorList>
            <consortium name="The MGC Project Team"/>
        </authorList>
    </citation>
    <scope>NUCLEOTIDE SEQUENCE [LARGE SCALE MRNA]</scope>
    <source>
        <tissue>Placenta</tissue>
    </source>
</reference>
<evidence type="ECO:0000250" key="1">
    <source>
        <dbReference type="UniProtKB" id="P13994"/>
    </source>
</evidence>
<evidence type="ECO:0000250" key="2">
    <source>
        <dbReference type="UniProtKB" id="Q9BW85"/>
    </source>
</evidence>
<evidence type="ECO:0000255" key="3"/>
<evidence type="ECO:0000256" key="4">
    <source>
        <dbReference type="SAM" id="MobiDB-lite"/>
    </source>
</evidence>
<evidence type="ECO:0000305" key="5"/>
<evidence type="ECO:0000312" key="6">
    <source>
        <dbReference type="RGD" id="1307598"/>
    </source>
</evidence>
<keyword id="KW-0175">Coiled coil</keyword>
<keyword id="KW-0539">Nucleus</keyword>
<keyword id="KW-0597">Phosphoprotein</keyword>
<keyword id="KW-1185">Reference proteome</keyword>
<name>YJU2B_RAT</name>
<sequence length="385" mass="43800">MGERKGQNKYYPPDFNPEKHGSLNRYHNSHPLRERARKLSQGILIIRFEMPYNIWCDGCKNHIGMGVRYNAEKKKVGNYYTTPIYRFRMKCHLCVNYIEMQTDPANCDYVIVSGASRKEERWDMEDNEQVLTTEHEKKEKLETDAMFRLEHGEADRSTLKKALPTLSHIQEAQNAWKDDFALNSMLRRHFREKKKAMQEEEEKDQALQAKANLAIPLVPESEDDRRLAALLRLHTLDSYEDKQRMKRTEIIHRSWFPSAQGPSTSSSKASTVLKKLCRGRRPPTGSAGAPGDLGIVRRKSREAPESPQCTADNSLSEEPRGPPGTTPDSKTLQGTAEAPRTSKTLESKRNCSDQALPLGSSQEDLLHPNTPNASLVADYSDSESE</sequence>
<dbReference type="EMBL" id="BC107912">
    <property type="protein sequence ID" value="AAI07913.1"/>
    <property type="molecule type" value="mRNA"/>
</dbReference>
<dbReference type="RefSeq" id="NP_001032733.1">
    <property type="nucleotide sequence ID" value="NM_001037644.1"/>
</dbReference>
<dbReference type="RefSeq" id="XP_006255314.1">
    <property type="nucleotide sequence ID" value="XM_006255252.5"/>
</dbReference>
<dbReference type="RefSeq" id="XP_017456743.1">
    <property type="nucleotide sequence ID" value="XM_017601254.1"/>
</dbReference>
<dbReference type="RefSeq" id="XP_063134037.1">
    <property type="nucleotide sequence ID" value="XM_063277967.1"/>
</dbReference>
<dbReference type="SMR" id="Q32PZ9"/>
<dbReference type="BioGRID" id="257942">
    <property type="interactions" value="1"/>
</dbReference>
<dbReference type="FunCoup" id="Q32PZ9">
    <property type="interactions" value="3180"/>
</dbReference>
<dbReference type="STRING" id="10116.ENSRNOP00000011150"/>
<dbReference type="PhosphoSitePlus" id="Q32PZ9"/>
<dbReference type="PaxDb" id="10116-ENSRNOP00000011150"/>
<dbReference type="Ensembl" id="ENSRNOT00000011150.8">
    <property type="protein sequence ID" value="ENSRNOP00000011150.4"/>
    <property type="gene ID" value="ENSRNOG00000008319.8"/>
</dbReference>
<dbReference type="Ensembl" id="ENSRNOT00000114282.1">
    <property type="protein sequence ID" value="ENSRNOP00000092066.1"/>
    <property type="gene ID" value="ENSRNOG00000008319.8"/>
</dbReference>
<dbReference type="GeneID" id="304656"/>
<dbReference type="KEGG" id="rno:304656"/>
<dbReference type="AGR" id="RGD:1307598"/>
<dbReference type="CTD" id="81576"/>
<dbReference type="RGD" id="1307598">
    <property type="gene designation" value="Yju2b"/>
</dbReference>
<dbReference type="eggNOG" id="KOG2990">
    <property type="taxonomic scope" value="Eukaryota"/>
</dbReference>
<dbReference type="GeneTree" id="ENSGT00530000063615"/>
<dbReference type="HOGENOM" id="CLU_050402_3_1_1"/>
<dbReference type="InParanoid" id="Q32PZ9"/>
<dbReference type="OMA" id="YDDAMYK"/>
<dbReference type="OrthoDB" id="360327at2759"/>
<dbReference type="PhylomeDB" id="Q32PZ9"/>
<dbReference type="TreeFam" id="TF313671"/>
<dbReference type="PRO" id="PR:Q32PZ9"/>
<dbReference type="Proteomes" id="UP000002494">
    <property type="component" value="Chromosome 19"/>
</dbReference>
<dbReference type="Bgee" id="ENSRNOG00000008319">
    <property type="expression patterns" value="Expressed in testis and 20 other cell types or tissues"/>
</dbReference>
<dbReference type="GO" id="GO:0071014">
    <property type="term" value="C:post-mRNA release spliceosomal complex"/>
    <property type="evidence" value="ECO:0000318"/>
    <property type="project" value="GO_Central"/>
</dbReference>
<dbReference type="GO" id="GO:0005684">
    <property type="term" value="C:U2-type spliceosomal complex"/>
    <property type="evidence" value="ECO:0000318"/>
    <property type="project" value="GO_Central"/>
</dbReference>
<dbReference type="GO" id="GO:0000398">
    <property type="term" value="P:mRNA splicing, via spliceosome"/>
    <property type="evidence" value="ECO:0007669"/>
    <property type="project" value="InterPro"/>
</dbReference>
<dbReference type="GO" id="GO:0009615">
    <property type="term" value="P:response to virus"/>
    <property type="evidence" value="ECO:0000266"/>
    <property type="project" value="RGD"/>
</dbReference>
<dbReference type="GO" id="GO:0008380">
    <property type="term" value="P:RNA splicing"/>
    <property type="evidence" value="ECO:0000318"/>
    <property type="project" value="GO_Central"/>
</dbReference>
<dbReference type="InterPro" id="IPR007590">
    <property type="entry name" value="Saf4/Yju2"/>
</dbReference>
<dbReference type="PANTHER" id="PTHR12111">
    <property type="entry name" value="SPLICING FACTOR YJU2"/>
    <property type="match status" value="1"/>
</dbReference>
<dbReference type="PANTHER" id="PTHR12111:SF2">
    <property type="entry name" value="SPLICING FACTOR YJU2B-RELATED"/>
    <property type="match status" value="1"/>
</dbReference>
<dbReference type="Pfam" id="PF04502">
    <property type="entry name" value="Saf4_Yju2"/>
    <property type="match status" value="1"/>
</dbReference>
<feature type="chain" id="PRO_0000280047" description="Probable splicing factor YJU2B">
    <location>
        <begin position="1"/>
        <end position="385"/>
    </location>
</feature>
<feature type="region of interest" description="Disordered" evidence="4">
    <location>
        <begin position="1"/>
        <end position="26"/>
    </location>
</feature>
<feature type="region of interest" description="Disordered" evidence="4">
    <location>
        <begin position="256"/>
        <end position="385"/>
    </location>
</feature>
<feature type="coiled-coil region" evidence="3">
    <location>
        <begin position="182"/>
        <end position="215"/>
    </location>
</feature>
<feature type="compositionally biased region" description="Polar residues" evidence="4">
    <location>
        <begin position="260"/>
        <end position="270"/>
    </location>
</feature>
<feature type="compositionally biased region" description="Polar residues" evidence="4">
    <location>
        <begin position="307"/>
        <end position="316"/>
    </location>
</feature>
<feature type="compositionally biased region" description="Polar residues" evidence="4">
    <location>
        <begin position="359"/>
        <end position="373"/>
    </location>
</feature>
<feature type="modified residue" description="Phosphoserine" evidence="1">
    <location>
        <position position="40"/>
    </location>
</feature>
<feature type="modified residue" description="Phosphoserine" evidence="1">
    <location>
        <position position="306"/>
    </location>
</feature>
<proteinExistence type="evidence at transcript level"/>
<gene>
    <name evidence="6" type="primary">Yju2b</name>
    <name evidence="6" type="synonym">Ccdc130</name>
</gene>
<comment type="function">
    <text evidence="2">May be involved in mRNA splicing.</text>
</comment>
<comment type="subcellular location">
    <subcellularLocation>
        <location evidence="2">Nucleus</location>
    </subcellularLocation>
</comment>
<comment type="similarity">
    <text evidence="5">Belongs to the CWC16 family.</text>
</comment>
<protein>
    <recommendedName>
        <fullName evidence="5">Probable splicing factor YJU2B</fullName>
    </recommendedName>
    <alternativeName>
        <fullName evidence="6">Coiled-coil domain-containing protein 130</fullName>
    </alternativeName>
</protein>